<comment type="function">
    <text evidence="1">May act as a double-stranded DNA (dsDNA) mimic. Probably regulates the activity of a dsDNA-binding protein.</text>
</comment>
<comment type="similarity">
    <text evidence="1">Belongs to the putative dsDNA mimic protein family.</text>
</comment>
<proteinExistence type="inferred from homology"/>
<sequence length="103" mass="11923">MNKLTPDEAIDLAYDIFLEMAGENLDPADILLFNLQFEERGAVEMVETSENWDQEIGTLIDPDAFAEVWVGLVNDKDEMDDVFARFLISHDADNREYHVIWKE</sequence>
<feature type="chain" id="PRO_1000131698" description="Putative double-stranded DNA mimic protein APP7_1400">
    <location>
        <begin position="1"/>
        <end position="103"/>
    </location>
</feature>
<evidence type="ECO:0000255" key="1">
    <source>
        <dbReference type="HAMAP-Rule" id="MF_00680"/>
    </source>
</evidence>
<gene>
    <name type="ordered locus">APP7_1400</name>
</gene>
<name>Y1400_ACTP7</name>
<reference key="1">
    <citation type="submission" date="2008-06" db="EMBL/GenBank/DDBJ databases">
        <title>Genome and proteome analysis of A. pleuropneumoniae serotype 7.</title>
        <authorList>
            <person name="Linke B."/>
            <person name="Buettner F."/>
            <person name="Martinez-Arias R."/>
            <person name="Goesmann A."/>
            <person name="Baltes N."/>
            <person name="Tegetmeyer H."/>
            <person name="Singh M."/>
            <person name="Gerlach G.F."/>
        </authorList>
    </citation>
    <scope>NUCLEOTIDE SEQUENCE [LARGE SCALE GENOMIC DNA]</scope>
    <source>
        <strain>AP76</strain>
    </source>
</reference>
<protein>
    <recommendedName>
        <fullName evidence="1">Putative double-stranded DNA mimic protein APP7_1400</fullName>
    </recommendedName>
</protein>
<accession>B3GYC8</accession>
<dbReference type="EMBL" id="CP001091">
    <property type="protein sequence ID" value="ACE62052.1"/>
    <property type="molecule type" value="Genomic_DNA"/>
</dbReference>
<dbReference type="RefSeq" id="WP_005598462.1">
    <property type="nucleotide sequence ID" value="NC_010939.1"/>
</dbReference>
<dbReference type="SMR" id="B3GYC8"/>
<dbReference type="KEGG" id="apa:APP7_1400"/>
<dbReference type="HOGENOM" id="CLU_143392_0_0_6"/>
<dbReference type="Proteomes" id="UP000001226">
    <property type="component" value="Chromosome"/>
</dbReference>
<dbReference type="Gene3D" id="3.10.450.140">
    <property type="entry name" value="dsDNA mimic, putative"/>
    <property type="match status" value="1"/>
</dbReference>
<dbReference type="HAMAP" id="MF_00680">
    <property type="entry name" value="Put_dsDNA_mimic"/>
    <property type="match status" value="1"/>
</dbReference>
<dbReference type="InterPro" id="IPR007376">
    <property type="entry name" value="dsDNA_mimic_put"/>
</dbReference>
<dbReference type="InterPro" id="IPR036763">
    <property type="entry name" value="Put_dsDNA_mimic_sf"/>
</dbReference>
<dbReference type="NCBIfam" id="NF003469">
    <property type="entry name" value="PRK05094.1"/>
    <property type="match status" value="1"/>
</dbReference>
<dbReference type="Pfam" id="PF04269">
    <property type="entry name" value="DUF440"/>
    <property type="match status" value="1"/>
</dbReference>
<dbReference type="PIRSF" id="PIRSF004916">
    <property type="entry name" value="UCP004916"/>
    <property type="match status" value="1"/>
</dbReference>
<dbReference type="SUPFAM" id="SSF102816">
    <property type="entry name" value="Putative dsDNA mimic"/>
    <property type="match status" value="1"/>
</dbReference>
<organism>
    <name type="scientific">Actinobacillus pleuropneumoniae serotype 7 (strain AP76)</name>
    <dbReference type="NCBI Taxonomy" id="537457"/>
    <lineage>
        <taxon>Bacteria</taxon>
        <taxon>Pseudomonadati</taxon>
        <taxon>Pseudomonadota</taxon>
        <taxon>Gammaproteobacteria</taxon>
        <taxon>Pasteurellales</taxon>
        <taxon>Pasteurellaceae</taxon>
        <taxon>Actinobacillus</taxon>
    </lineage>
</organism>